<sequence>MTKVAIIGAGPCGLSALRSFEQAEKNGEKIPEIVCFDKQEDWGGLWNYSWRTGSDQYGDPVPNSMYRYLWSNGPKECLEFADYSFDEHFGKPIPSFPPREVLYNYILGRVKKGNLKSKIKFNTTVTNVSYDNENFEVTYRDKKNDKISKDIFDYVIVSTGHFSVPFIPEYPGMKAFPGRIMHSHDFRDAEEFRGKNVVVLGSSYSAEDVALQCHKYGAKSVTIGYRHNPMGFKWPEGMKEVFHLDRLEGNKAIFKDGHVQETDAVILCTGYLHHFPFMSEDLKLKTGNRLYPPMLYKGVVWQNNHKLMYLGMQDQFHTFNMFDCQAWFARDVIMGKIKTPNDSEIEKDINKWVSMEEKLENADQMIDFQTEYTKELHELSDYPKIDFELIRKTFKEWEHHKVENIMTYRNKSFASPVTGSVGPIHHTPWEEAMDDSLKTFLNK</sequence>
<name>TMM_PELU1</name>
<feature type="chain" id="PRO_0000458078" description="Trimethylamine monooxygenase">
    <location>
        <begin position="1"/>
        <end position="443"/>
    </location>
</feature>
<feature type="binding site" evidence="1">
    <location>
        <position position="37"/>
    </location>
    <ligand>
        <name>FAD</name>
        <dbReference type="ChEBI" id="CHEBI:57692"/>
    </ligand>
</feature>
<feature type="binding site" evidence="1">
    <location>
        <position position="39"/>
    </location>
    <ligand>
        <name>FAD</name>
        <dbReference type="ChEBI" id="CHEBI:57692"/>
    </ligand>
</feature>
<feature type="binding site" evidence="1">
    <location>
        <position position="45"/>
    </location>
    <ligand>
        <name>FAD</name>
        <dbReference type="ChEBI" id="CHEBI:57692"/>
    </ligand>
</feature>
<feature type="binding site" evidence="1">
    <location>
        <position position="46"/>
    </location>
    <ligand>
        <name>FAD</name>
        <dbReference type="ChEBI" id="CHEBI:57692"/>
    </ligand>
</feature>
<feature type="binding site" evidence="1">
    <location>
        <position position="70"/>
    </location>
    <ligand>
        <name>NADP(+)</name>
        <dbReference type="ChEBI" id="CHEBI:58349"/>
    </ligand>
</feature>
<feature type="binding site" evidence="1">
    <location>
        <position position="72"/>
    </location>
    <ligand>
        <name>FAD</name>
        <dbReference type="ChEBI" id="CHEBI:57692"/>
    </ligand>
</feature>
<feature type="binding site" evidence="1">
    <location>
        <position position="72"/>
    </location>
    <ligand>
        <name>NADP(+)</name>
        <dbReference type="ChEBI" id="CHEBI:58349"/>
    </ligand>
</feature>
<feature type="binding site" evidence="1">
    <location>
        <position position="125"/>
    </location>
    <ligand>
        <name>FAD</name>
        <dbReference type="ChEBI" id="CHEBI:57692"/>
    </ligand>
</feature>
<feature type="binding site" evidence="1">
    <location>
        <position position="170"/>
    </location>
    <ligand>
        <name>NADP(+)</name>
        <dbReference type="ChEBI" id="CHEBI:58349"/>
    </ligand>
</feature>
<feature type="binding site" evidence="1">
    <location>
        <position position="202"/>
    </location>
    <ligand>
        <name>NADP(+)</name>
        <dbReference type="ChEBI" id="CHEBI:58349"/>
    </ligand>
</feature>
<feature type="binding site" evidence="1">
    <location>
        <position position="203"/>
    </location>
    <ligand>
        <name>NADP(+)</name>
        <dbReference type="ChEBI" id="CHEBI:58349"/>
    </ligand>
</feature>
<feature type="binding site" evidence="1">
    <location>
        <position position="205"/>
    </location>
    <ligand>
        <name>NADP(+)</name>
        <dbReference type="ChEBI" id="CHEBI:58349"/>
    </ligand>
</feature>
<feature type="binding site" evidence="1">
    <location>
        <position position="226"/>
    </location>
    <ligand>
        <name>NADP(+)</name>
        <dbReference type="ChEBI" id="CHEBI:58349"/>
    </ligand>
</feature>
<feature type="binding site" evidence="1">
    <location>
        <position position="315"/>
    </location>
    <ligand>
        <name>FAD</name>
        <dbReference type="ChEBI" id="CHEBI:57692"/>
    </ligand>
</feature>
<feature type="binding site" evidence="1">
    <location>
        <position position="318"/>
    </location>
    <ligand>
        <name>FAD</name>
        <dbReference type="ChEBI" id="CHEBI:57692"/>
    </ligand>
</feature>
<feature type="binding site" evidence="1">
    <location>
        <position position="409"/>
    </location>
    <ligand>
        <name>NADP(+)</name>
        <dbReference type="ChEBI" id="CHEBI:58349"/>
    </ligand>
</feature>
<organism>
    <name type="scientific">Pelagibacter ubique (strain HTCC1002)</name>
    <dbReference type="NCBI Taxonomy" id="314261"/>
    <lineage>
        <taxon>Bacteria</taxon>
        <taxon>Pseudomonadati</taxon>
        <taxon>Pseudomonadota</taxon>
        <taxon>Alphaproteobacteria</taxon>
        <taxon>Candidatus Pelagibacterales</taxon>
        <taxon>Candidatus Pelagibacteraceae</taxon>
        <taxon>Candidatus Pelagibacter</taxon>
    </lineage>
</organism>
<comment type="function">
    <text evidence="2">Catalyzes the oxidation of trimethylamine (TMA) to produce trimethylamine N-oxide (TMAO) (PubMed:22006322). In vitro, has a broad substrate specificity, oxidizing many nitrogen- and sulfur-containing compounds, including dimethylamine (DMA), dimethylsulfide (DMS) and dimethylsulfoxide (DMSO) (PubMed:22006322).</text>
</comment>
<comment type="catalytic activity">
    <reaction evidence="2">
        <text>trimethylamine + NADPH + O2 = trimethylamine N-oxide + NADP(+) + H2O</text>
        <dbReference type="Rhea" id="RHEA:31979"/>
        <dbReference type="ChEBI" id="CHEBI:15377"/>
        <dbReference type="ChEBI" id="CHEBI:15379"/>
        <dbReference type="ChEBI" id="CHEBI:15724"/>
        <dbReference type="ChEBI" id="CHEBI:57783"/>
        <dbReference type="ChEBI" id="CHEBI:58349"/>
        <dbReference type="ChEBI" id="CHEBI:58389"/>
        <dbReference type="EC" id="1.14.13.148"/>
    </reaction>
</comment>
<comment type="cofactor">
    <cofactor evidence="1">
        <name>FAD</name>
        <dbReference type="ChEBI" id="CHEBI:57692"/>
    </cofactor>
</comment>
<comment type="biophysicochemical properties">
    <kinetics>
        <KM evidence="2">27.5 uM for TMA</KM>
        <KM evidence="2">1237.7 uM for DMA</KM>
        <KM evidence="2">33.2 uM for DMS</KM>
        <KM evidence="2">19334.3 uM for DMSO</KM>
        <Vmax evidence="2">70.8 nmol/min/mg enzyme with TMA as substrate</Vmax>
        <Vmax evidence="2">41.2 nmol/min/mg enzyme with DMA as substrate</Vmax>
        <Vmax evidence="2">50.8 nmol/min/mg enzyme with DMS as substrate</Vmax>
        <Vmax evidence="2">29.9 nmol/min/mg enzyme with DMSO as substrate</Vmax>
    </kinetics>
</comment>
<comment type="similarity">
    <text evidence="4">Belongs to the FMO family.</text>
</comment>
<dbReference type="EC" id="1.14.13.148" evidence="2"/>
<dbReference type="EMBL" id="AAPV01000001">
    <property type="protein sequence ID" value="EAS85405.1"/>
    <property type="molecule type" value="Genomic_DNA"/>
</dbReference>
<dbReference type="RefSeq" id="WP_006997992.1">
    <property type="nucleotide sequence ID" value="NZ_CH724130.1"/>
</dbReference>
<dbReference type="SMR" id="Q1V023"/>
<dbReference type="HOGENOM" id="CLU_006909_3_0_5"/>
<dbReference type="Proteomes" id="UP000005306">
    <property type="component" value="Unassembled WGS sequence"/>
</dbReference>
<dbReference type="GO" id="GO:0050660">
    <property type="term" value="F:flavin adenine dinucleotide binding"/>
    <property type="evidence" value="ECO:0007669"/>
    <property type="project" value="InterPro"/>
</dbReference>
<dbReference type="GO" id="GO:0004499">
    <property type="term" value="F:N,N-dimethylaniline monooxygenase activity"/>
    <property type="evidence" value="ECO:0007669"/>
    <property type="project" value="InterPro"/>
</dbReference>
<dbReference type="GO" id="GO:0050661">
    <property type="term" value="F:NADP binding"/>
    <property type="evidence" value="ECO:0007669"/>
    <property type="project" value="InterPro"/>
</dbReference>
<dbReference type="FunFam" id="3.50.50.60:FF:000138">
    <property type="entry name" value="Flavin-containing monooxygenase"/>
    <property type="match status" value="1"/>
</dbReference>
<dbReference type="Gene3D" id="3.50.50.60">
    <property type="entry name" value="FAD/NAD(P)-binding domain"/>
    <property type="match status" value="2"/>
</dbReference>
<dbReference type="InterPro" id="IPR036188">
    <property type="entry name" value="FAD/NAD-bd_sf"/>
</dbReference>
<dbReference type="InterPro" id="IPR000960">
    <property type="entry name" value="Flavin_mOase"/>
</dbReference>
<dbReference type="InterPro" id="IPR020946">
    <property type="entry name" value="Flavin_mOase-like"/>
</dbReference>
<dbReference type="InterPro" id="IPR050346">
    <property type="entry name" value="FMO-like"/>
</dbReference>
<dbReference type="PANTHER" id="PTHR23023">
    <property type="entry name" value="DIMETHYLANILINE MONOOXYGENASE"/>
    <property type="match status" value="1"/>
</dbReference>
<dbReference type="Pfam" id="PF00743">
    <property type="entry name" value="FMO-like"/>
    <property type="match status" value="2"/>
</dbReference>
<dbReference type="PIRSF" id="PIRSF000332">
    <property type="entry name" value="FMO"/>
    <property type="match status" value="1"/>
</dbReference>
<dbReference type="SUPFAM" id="SSF51905">
    <property type="entry name" value="FAD/NAD(P)-binding domain"/>
    <property type="match status" value="2"/>
</dbReference>
<evidence type="ECO:0000250" key="1">
    <source>
        <dbReference type="UniProtKB" id="A3SLM3"/>
    </source>
</evidence>
<evidence type="ECO:0000269" key="2">
    <source>
    </source>
</evidence>
<evidence type="ECO:0000303" key="3">
    <source>
    </source>
</evidence>
<evidence type="ECO:0000305" key="4"/>
<evidence type="ECO:0000312" key="5">
    <source>
        <dbReference type="EMBL" id="EAS85405.1"/>
    </source>
</evidence>
<keyword id="KW-0274">FAD</keyword>
<keyword id="KW-0285">Flavoprotein</keyword>
<keyword id="KW-0503">Monooxygenase</keyword>
<keyword id="KW-0521">NADP</keyword>
<keyword id="KW-0560">Oxidoreductase</keyword>
<accession>Q1V023</accession>
<gene>
    <name evidence="3" type="primary">tmm</name>
    <name evidence="5" type="ORF">PU1002_06771</name>
</gene>
<protein>
    <recommendedName>
        <fullName evidence="3">Trimethylamine monooxygenase</fullName>
        <shortName evidence="3">TMA monooxygenase</shortName>
        <shortName evidence="3">Tmm</shortName>
        <ecNumber evidence="2">1.14.13.148</ecNumber>
    </recommendedName>
</protein>
<reference key="1">
    <citation type="submission" date="2006-04" db="EMBL/GenBank/DDBJ databases">
        <authorList>
            <person name="Giovannoni S.J."/>
            <person name="Cho J.-C."/>
            <person name="Ferriera S."/>
            <person name="Johnson J."/>
            <person name="Kravitz S."/>
            <person name="Halpern A."/>
            <person name="Remington K."/>
            <person name="Beeson K."/>
            <person name="Tran B."/>
            <person name="Rogers Y.-H."/>
            <person name="Friedman R."/>
            <person name="Venter J.C."/>
        </authorList>
    </citation>
    <scope>NUCLEOTIDE SEQUENCE [LARGE SCALE GENOMIC DNA]</scope>
    <source>
        <strain>HTCC1002</strain>
    </source>
</reference>
<reference key="2">
    <citation type="journal article" date="2011" name="Proc. Natl. Acad. Sci. U.S.A.">
        <title>Bacterial flavin-containing monooxygenase is trimethylamine monooxygenase.</title>
        <authorList>
            <person name="Chen Y."/>
            <person name="Patel N.A."/>
            <person name="Crombie A."/>
            <person name="Scrivens J.H."/>
            <person name="Murrell J.C."/>
        </authorList>
    </citation>
    <scope>FUNCTION</scope>
    <scope>CATALYTIC ACTIVITY</scope>
    <scope>BIOPHYSICOCHEMICAL PROPERTIES</scope>
    <source>
        <strain>HTCC1002</strain>
    </source>
</reference>
<proteinExistence type="evidence at protein level"/>